<accession>J4VSL0</accession>
<proteinExistence type="inferred from homology"/>
<dbReference type="EC" id="2.3.1.-" evidence="7"/>
<dbReference type="EMBL" id="JH725204">
    <property type="protein sequence ID" value="EJP61580.1"/>
    <property type="molecule type" value="Genomic_DNA"/>
</dbReference>
<dbReference type="RefSeq" id="XP_008602809.1">
    <property type="nucleotide sequence ID" value="XM_008604587.1"/>
</dbReference>
<dbReference type="SMR" id="J4VSL0"/>
<dbReference type="STRING" id="655819.J4VSL0"/>
<dbReference type="GeneID" id="19892502"/>
<dbReference type="HOGENOM" id="CLU_027095_1_0_1"/>
<dbReference type="InParanoid" id="J4VSL0"/>
<dbReference type="OrthoDB" id="2040at474943"/>
<dbReference type="Proteomes" id="UP000002762">
    <property type="component" value="Unassembled WGS sequence"/>
</dbReference>
<dbReference type="GO" id="GO:0005829">
    <property type="term" value="C:cytosol"/>
    <property type="evidence" value="ECO:0007669"/>
    <property type="project" value="UniProtKB-SubCell"/>
</dbReference>
<dbReference type="GO" id="GO:0016410">
    <property type="term" value="F:N-acyltransferase activity"/>
    <property type="evidence" value="ECO:0007669"/>
    <property type="project" value="TreeGrafter"/>
</dbReference>
<dbReference type="Gene3D" id="3.40.630.30">
    <property type="match status" value="1"/>
</dbReference>
<dbReference type="InterPro" id="IPR016181">
    <property type="entry name" value="Acyl_CoA_acyltransferase"/>
</dbReference>
<dbReference type="PANTHER" id="PTHR31438">
    <property type="entry name" value="LYSINE N-ACYLTRANSFERASE C17G9.06C-RELATED"/>
    <property type="match status" value="1"/>
</dbReference>
<dbReference type="PANTHER" id="PTHR31438:SF1">
    <property type="entry name" value="LYSINE N-ACYLTRANSFERASE C17G9.06C-RELATED"/>
    <property type="match status" value="1"/>
</dbReference>
<dbReference type="Pfam" id="PF13523">
    <property type="entry name" value="Acetyltransf_8"/>
    <property type="match status" value="1"/>
</dbReference>
<dbReference type="SUPFAM" id="SSF55729">
    <property type="entry name" value="Acyl-CoA N-acyltransferases (Nat)"/>
    <property type="match status" value="1"/>
</dbReference>
<keyword id="KW-0012">Acyltransferase</keyword>
<keyword id="KW-0963">Cytoplasm</keyword>
<keyword id="KW-1185">Reference proteome</keyword>
<keyword id="KW-0808">Transferase</keyword>
<keyword id="KW-0843">Virulence</keyword>
<sequence>MTPETVYLPDGQTYTVSPVFGGFGFKSNDLTHAAHFPVGWHIVVHTEEEKIVFQDGSEASVNGEGHAQPAGDDHATAVDAGDGSAQKRKKRVRPFVQPTRQNDTLFISSLSTPSTQEYGPPASPTRQIAMILWVSLYWYFHQREPSPRMSTKASHETPESAKPTGEWRITIQRDGVLRGRNLIPKLERMGLLATESTDVGTSLDDGDETWSNMFVSQRMFWQLPPNLFLFTLKPVKAPSPWPGSSGSPNDSRPGSPVAQGATHLAVRAMSPQPGVARLYNDLPGAPTPTNITAGVSTAHPITPFFSTSHLPTYYPPLTLQYTFTNNLRHPLRPKPPRMGEIFYSRFVPSVGRYLSFRVASLSPEPVPYFGPMGPNPPDHPELACLSDTQLLESWFAKPRVSAFWGKFTPEFLPTVVKLKHSFPAIGLWDGVPFGYFEIYWVKEDILGKVLGGEAGDFDRGLHVMVGEEWARGRASEWMTGLVHWCLTTDMRTMNVCLEPRIDNERILKHLDESGFGRERQLSFPHKQSC</sequence>
<comment type="function">
    <text evidence="4">Acyltransferase; part of the gene cluster that mediates the biosynthesis of at least 11 siderophores, including beauverichelin A, dimerumic acid (DA), Na-dimethyl coprogen (NADC), eleutherazine B, ferricrocin (FC), fusarinine A, fusarinine C (FsC), metachelin A, mevalonolactone, rhodotorulic acid (RA) and tenellin (PubMed:39109629). This cocktail of siderophores for iron metabolism is essential for virulence, and more specifically for the fungal virulence in penetrating through the host cuticle (PubMed:39109629). Siderophore synthesis is also involved in conidial germination under iron-deficient conditions (PubMed:39109629). SIDL contributes to partial production of ferricrocin under iron-limiting conditions via the acetylation of N(5)-hydroxyornithine (PubMed:39109629).</text>
</comment>
<comment type="pathway">
    <text evidence="4">Siderophore biosynthesis.</text>
</comment>
<comment type="subcellular location">
    <subcellularLocation>
        <location evidence="1">Cytoplasm</location>
        <location evidence="1">Cytosol</location>
    </subcellularLocation>
</comment>
<comment type="disruption phenotype">
    <text evidence="4">Leads to increased sensitivity to oxidative stress and iron-starvation, reduced conidial germination as well as reduced virulence (PubMed:39109629). Reduces the ferricrocin yield to half but increases significantly the production of beauverichelin A and fusarinine C (PubMed:39109629).</text>
</comment>
<comment type="similarity">
    <text evidence="6">Belongs to the lysine N-acyltransferase mbtK family.</text>
</comment>
<gene>
    <name evidence="5" type="primary">SIDL</name>
    <name type="ORF">BBA_09490</name>
</gene>
<name>SIDL_BEAB2</name>
<feature type="chain" id="PRO_0000461398" description="N5-hydroxyornithine acetylase sidL">
    <location>
        <begin position="1"/>
        <end position="529"/>
    </location>
</feature>
<feature type="region of interest" description="Disordered" evidence="3">
    <location>
        <begin position="59"/>
        <end position="95"/>
    </location>
</feature>
<feature type="region of interest" description="Disordered" evidence="3">
    <location>
        <begin position="239"/>
        <end position="258"/>
    </location>
</feature>
<feature type="active site" description="Proton acceptor" evidence="2">
    <location>
        <position position="498"/>
    </location>
</feature>
<feature type="binding site" evidence="2">
    <location>
        <position position="462"/>
    </location>
    <ligand>
        <name>substrate</name>
    </ligand>
</feature>
<reference key="1">
    <citation type="journal article" date="2012" name="Sci. Rep.">
        <title>Genomic perspectives on the evolution of fungal entomopathogenicity in Beauveria bassiana.</title>
        <authorList>
            <person name="Xiao G."/>
            <person name="Ying S.-H."/>
            <person name="Zheng P."/>
            <person name="Wang Z.-L."/>
            <person name="Zhang S."/>
            <person name="Xie X.-Q."/>
            <person name="Shang Y."/>
            <person name="St Leger R.J."/>
            <person name="Zhao G.-P."/>
            <person name="Wang C."/>
            <person name="Feng M.-G."/>
        </authorList>
    </citation>
    <scope>NUCLEOTIDE SEQUENCE [LARGE SCALE GENOMIC DNA]</scope>
    <source>
        <strain>ARSEF 2860</strain>
    </source>
</reference>
<reference key="2">
    <citation type="journal article" date="2024" name="J. Agric. Food Chem.">
        <title>Unlocking the siderophore biosynthesis pathway and its biological functions in the fungal insect pathogen Beauveria bassiana.</title>
        <authorList>
            <person name="Sun T.F."/>
            <person name="Ge Z.W."/>
            <person name="Xu H.R."/>
            <person name="Zhang H."/>
            <person name="Huang S.S."/>
            <person name="Feng M.G."/>
            <person name="Ying S.H."/>
        </authorList>
    </citation>
    <scope>FUNCTION</scope>
    <scope>DISRUPTION PHENOTYPE</scope>
    <scope>PATHWAY</scope>
</reference>
<organism>
    <name type="scientific">Beauveria bassiana (strain ARSEF 2860)</name>
    <name type="common">White muscardine disease fungus</name>
    <name type="synonym">Tritirachium shiotae</name>
    <dbReference type="NCBI Taxonomy" id="655819"/>
    <lineage>
        <taxon>Eukaryota</taxon>
        <taxon>Fungi</taxon>
        <taxon>Dikarya</taxon>
        <taxon>Ascomycota</taxon>
        <taxon>Pezizomycotina</taxon>
        <taxon>Sordariomycetes</taxon>
        <taxon>Hypocreomycetidae</taxon>
        <taxon>Hypocreales</taxon>
        <taxon>Cordycipitaceae</taxon>
        <taxon>Beauveria</taxon>
    </lineage>
</organism>
<protein>
    <recommendedName>
        <fullName evidence="5">N5-hydroxyornithine acetylase sidL</fullName>
        <ecNumber evidence="7">2.3.1.-</ecNumber>
    </recommendedName>
    <alternativeName>
        <fullName evidence="5">Siderophore biosynthesis cluster protein L</fullName>
    </alternativeName>
</protein>
<evidence type="ECO:0000250" key="1">
    <source>
        <dbReference type="UniProtKB" id="Q4WJX7"/>
    </source>
</evidence>
<evidence type="ECO:0000255" key="2"/>
<evidence type="ECO:0000256" key="3">
    <source>
        <dbReference type="SAM" id="MobiDB-lite"/>
    </source>
</evidence>
<evidence type="ECO:0000269" key="4">
    <source>
    </source>
</evidence>
<evidence type="ECO:0000303" key="5">
    <source>
    </source>
</evidence>
<evidence type="ECO:0000305" key="6"/>
<evidence type="ECO:0000305" key="7">
    <source>
    </source>
</evidence>